<organism>
    <name type="scientific">Idiomarina loihiensis (strain ATCC BAA-735 / DSM 15497 / L2-TR)</name>
    <dbReference type="NCBI Taxonomy" id="283942"/>
    <lineage>
        <taxon>Bacteria</taxon>
        <taxon>Pseudomonadati</taxon>
        <taxon>Pseudomonadota</taxon>
        <taxon>Gammaproteobacteria</taxon>
        <taxon>Alteromonadales</taxon>
        <taxon>Idiomarinaceae</taxon>
        <taxon>Idiomarina</taxon>
    </lineage>
</organism>
<accession>Q5R077</accession>
<comment type="function">
    <text evidence="1">Part of an energy-coupled inorganic carbon pump.</text>
</comment>
<comment type="cofactor">
    <cofactor evidence="1">
        <name>Zn(2+)</name>
        <dbReference type="ChEBI" id="CHEBI:29105"/>
    </cofactor>
</comment>
<comment type="subunit">
    <text evidence="1">Forms a complex with DabB.</text>
</comment>
<comment type="subcellular location">
    <subcellularLocation>
        <location evidence="1">Cell inner membrane</location>
        <topology evidence="1">Peripheral membrane protein</topology>
    </subcellularLocation>
</comment>
<comment type="similarity">
    <text evidence="1">Belongs to the inorganic carbon transporter (TC 9.A.2) DabA family.</text>
</comment>
<protein>
    <recommendedName>
        <fullName evidence="1">Probable inorganic carbon transporter subunit DabA</fullName>
    </recommendedName>
</protein>
<keyword id="KW-0997">Cell inner membrane</keyword>
<keyword id="KW-1003">Cell membrane</keyword>
<keyword id="KW-0472">Membrane</keyword>
<keyword id="KW-0479">Metal-binding</keyword>
<keyword id="KW-1185">Reference proteome</keyword>
<keyword id="KW-0813">Transport</keyword>
<keyword id="KW-0862">Zinc</keyword>
<reference key="1">
    <citation type="journal article" date="2004" name="Proc. Natl. Acad. Sci. U.S.A.">
        <title>Genome sequence of the deep-sea gamma-proteobacterium Idiomarina loihiensis reveals amino acid fermentation as a source of carbon and energy.</title>
        <authorList>
            <person name="Hou S."/>
            <person name="Saw J.H."/>
            <person name="Lee K.S."/>
            <person name="Freitas T.A."/>
            <person name="Belisle C."/>
            <person name="Kawarabayasi Y."/>
            <person name="Donachie S.P."/>
            <person name="Pikina A."/>
            <person name="Galperin M.Y."/>
            <person name="Koonin E.V."/>
            <person name="Makarova K.S."/>
            <person name="Omelchenko M.V."/>
            <person name="Sorokin A."/>
            <person name="Wolf Y.I."/>
            <person name="Li Q.X."/>
            <person name="Keum Y.S."/>
            <person name="Campbell S."/>
            <person name="Denery J."/>
            <person name="Aizawa S."/>
            <person name="Shibata S."/>
            <person name="Malahoff A."/>
            <person name="Alam M."/>
        </authorList>
    </citation>
    <scope>NUCLEOTIDE SEQUENCE [LARGE SCALE GENOMIC DNA]</scope>
    <source>
        <strain>ATCC BAA-735 / DSM 15497 / L2-TR</strain>
    </source>
</reference>
<dbReference type="EMBL" id="AE017340">
    <property type="protein sequence ID" value="AAV81367.1"/>
    <property type="molecule type" value="Genomic_DNA"/>
</dbReference>
<dbReference type="RefSeq" id="WP_011233784.1">
    <property type="nucleotide sequence ID" value="NC_006512.1"/>
</dbReference>
<dbReference type="STRING" id="283942.IL0525"/>
<dbReference type="GeneID" id="41335676"/>
<dbReference type="KEGG" id="ilo:IL0525"/>
<dbReference type="eggNOG" id="COG3002">
    <property type="taxonomic scope" value="Bacteria"/>
</dbReference>
<dbReference type="HOGENOM" id="CLU_009885_1_0_6"/>
<dbReference type="OrthoDB" id="9805101at2"/>
<dbReference type="Proteomes" id="UP000001171">
    <property type="component" value="Chromosome"/>
</dbReference>
<dbReference type="GO" id="GO:0005886">
    <property type="term" value="C:plasma membrane"/>
    <property type="evidence" value="ECO:0007669"/>
    <property type="project" value="UniProtKB-SubCell"/>
</dbReference>
<dbReference type="GO" id="GO:0008270">
    <property type="term" value="F:zinc ion binding"/>
    <property type="evidence" value="ECO:0007669"/>
    <property type="project" value="UniProtKB-UniRule"/>
</dbReference>
<dbReference type="HAMAP" id="MF_01871">
    <property type="entry name" value="DabA"/>
    <property type="match status" value="1"/>
</dbReference>
<dbReference type="InterPro" id="IPR018752">
    <property type="entry name" value="DabA"/>
</dbReference>
<dbReference type="PANTHER" id="PTHR38344:SF1">
    <property type="entry name" value="INORGANIC CARBON TRANSPORTER SUBUNIT DABA-RELATED"/>
    <property type="match status" value="1"/>
</dbReference>
<dbReference type="PANTHER" id="PTHR38344">
    <property type="entry name" value="UPF0753 PROTEIN AQ_863"/>
    <property type="match status" value="1"/>
</dbReference>
<dbReference type="Pfam" id="PF10070">
    <property type="entry name" value="DabA"/>
    <property type="match status" value="1"/>
</dbReference>
<gene>
    <name evidence="1" type="primary">dabA</name>
    <name type="ordered locus">IL0525</name>
</gene>
<name>DABA_IDILO</name>
<proteinExistence type="inferred from homology"/>
<evidence type="ECO:0000255" key="1">
    <source>
        <dbReference type="HAMAP-Rule" id="MF_01871"/>
    </source>
</evidence>
<sequence length="757" mass="85144">MSTANRLATIAGQVSKAIAPQWPLSQWIAVNPFWHYRQQPVAGVAAHWRYSAGTRLLMSPDFYWQQWQQNRIDAALVTNKMVNELEQRSLLKAQLPQWRNLSRLVDKYTRRRRKMRWNDEVVLQISQTCGLFMQFPTRFQQAGKDSSLYQHWLTISRADRGIETLMDEAELTELFAQLPDDPHKLIQVCHDNFLSDASDYALRCYSQALISDLWGWAAAFSYQDARQDSQWVFELLCIRLAWEYILWQLAERTNTKVYQQLQQALSAQVENCEGQVAHIEQHNSLLWQWQAAYERSQLNRLQFKSDTVEESNAPDVQAVFCIDVRSERYRRALEQAGKSLGSYVQSKGFAGFFGVPLAIQRKGRDVPHVPGLLQPAYYIKAPARKQSVGSLLSNMFNAPVSMFSGVEALGLSKLKSLLTGVPGQLATANNAYIADGSICEHNGEASMESLVGICQQALAGMQFTRFARHIVLVGHGSHHSNNAQRAGLNCGACGGQTGALSARVLVRLLNNQNIREHLREQGVAIPDATQFHSAMHETVTDKVIWLSNTVPDSVKQVFRAATEKLTQACGESEKDRKTRSGHWAELRPEWGLADNNVLFFGQADRLTSADTIGSNFLHDYNSINDPDGELLAQLMSAPGLVANWINWQYYCSVTEPKQLGSGNKLLHNRVANDIGVFEGNGGDLRQGLAWQSVHNGSDFVHRPMRLQVIVEADEATIQRALAKAVAFNELFEQQWINLHRLNARGELCPVTTPVTAK</sequence>
<feature type="chain" id="PRO_0000387267" description="Probable inorganic carbon transporter subunit DabA">
    <location>
        <begin position="1"/>
        <end position="757"/>
    </location>
</feature>
<feature type="binding site" evidence="1">
    <location>
        <position position="321"/>
    </location>
    <ligand>
        <name>Zn(2+)</name>
        <dbReference type="ChEBI" id="CHEBI:29105"/>
    </ligand>
</feature>
<feature type="binding site" evidence="1">
    <location>
        <position position="323"/>
    </location>
    <ligand>
        <name>Zn(2+)</name>
        <dbReference type="ChEBI" id="CHEBI:29105"/>
    </ligand>
</feature>
<feature type="binding site" evidence="1">
    <location>
        <position position="475"/>
    </location>
    <ligand>
        <name>Zn(2+)</name>
        <dbReference type="ChEBI" id="CHEBI:29105"/>
    </ligand>
</feature>
<feature type="binding site" evidence="1">
    <location>
        <position position="490"/>
    </location>
    <ligand>
        <name>Zn(2+)</name>
        <dbReference type="ChEBI" id="CHEBI:29105"/>
    </ligand>
</feature>